<proteinExistence type="inferred from homology"/>
<dbReference type="EC" id="4.1.1.50" evidence="1"/>
<dbReference type="EMBL" id="AJ248288">
    <property type="protein sequence ID" value="CAB50680.1"/>
    <property type="molecule type" value="Genomic_DNA"/>
</dbReference>
<dbReference type="EMBL" id="HE613800">
    <property type="protein sequence ID" value="CCE71249.1"/>
    <property type="molecule type" value="Genomic_DNA"/>
</dbReference>
<dbReference type="PIR" id="B75030">
    <property type="entry name" value="B75030"/>
</dbReference>
<dbReference type="RefSeq" id="WP_010868894.1">
    <property type="nucleotide sequence ID" value="NC_000868.1"/>
</dbReference>
<dbReference type="SMR" id="Q9UXT3"/>
<dbReference type="STRING" id="272844.PAB1162"/>
<dbReference type="KEGG" id="pab:PAB1162"/>
<dbReference type="PATRIC" id="fig|272844.11.peg.1894"/>
<dbReference type="eggNOG" id="arCOG00279">
    <property type="taxonomic scope" value="Archaea"/>
</dbReference>
<dbReference type="HOGENOM" id="CLU_125470_2_3_2"/>
<dbReference type="OrthoDB" id="114016at2157"/>
<dbReference type="PhylomeDB" id="Q9UXT3"/>
<dbReference type="UniPathway" id="UPA00331">
    <property type="reaction ID" value="UER00451"/>
</dbReference>
<dbReference type="Proteomes" id="UP000000810">
    <property type="component" value="Chromosome"/>
</dbReference>
<dbReference type="Proteomes" id="UP000009139">
    <property type="component" value="Chromosome"/>
</dbReference>
<dbReference type="GO" id="GO:0005829">
    <property type="term" value="C:cytosol"/>
    <property type="evidence" value="ECO:0007669"/>
    <property type="project" value="TreeGrafter"/>
</dbReference>
<dbReference type="GO" id="GO:0004014">
    <property type="term" value="F:adenosylmethionine decarboxylase activity"/>
    <property type="evidence" value="ECO:0007669"/>
    <property type="project" value="UniProtKB-UniRule"/>
</dbReference>
<dbReference type="GO" id="GO:0008295">
    <property type="term" value="P:spermidine biosynthetic process"/>
    <property type="evidence" value="ECO:0007669"/>
    <property type="project" value="UniProtKB-UniRule"/>
</dbReference>
<dbReference type="FunFam" id="3.30.160.750:FF:000001">
    <property type="entry name" value="S-adenosylmethionine decarboxylase proenzyme"/>
    <property type="match status" value="1"/>
</dbReference>
<dbReference type="FunFam" id="3.30.360.110:FF:000001">
    <property type="entry name" value="S-adenosylmethionine decarboxylase proenzyme"/>
    <property type="match status" value="1"/>
</dbReference>
<dbReference type="Gene3D" id="3.30.160.750">
    <property type="match status" value="1"/>
</dbReference>
<dbReference type="Gene3D" id="3.30.360.110">
    <property type="entry name" value="S-adenosylmethionine decarboxylase domain"/>
    <property type="match status" value="1"/>
</dbReference>
<dbReference type="HAMAP" id="MF_00464">
    <property type="entry name" value="AdoMetDC_1"/>
    <property type="match status" value="1"/>
</dbReference>
<dbReference type="InterPro" id="IPR042286">
    <property type="entry name" value="AdoMetDC_C"/>
</dbReference>
<dbReference type="InterPro" id="IPR003826">
    <property type="entry name" value="AdoMetDC_fam_prok"/>
</dbReference>
<dbReference type="InterPro" id="IPR042284">
    <property type="entry name" value="AdoMetDC_N"/>
</dbReference>
<dbReference type="InterPro" id="IPR016067">
    <property type="entry name" value="S-AdoMet_deCO2ase_core"/>
</dbReference>
<dbReference type="InterPro" id="IPR017716">
    <property type="entry name" value="S-AdoMet_deCOase_pro-enz"/>
</dbReference>
<dbReference type="NCBIfam" id="TIGR03330">
    <property type="entry name" value="SAM_DCase_Bsu"/>
    <property type="match status" value="1"/>
</dbReference>
<dbReference type="PANTHER" id="PTHR33866">
    <property type="entry name" value="S-ADENOSYLMETHIONINE DECARBOXYLASE PROENZYME"/>
    <property type="match status" value="1"/>
</dbReference>
<dbReference type="PANTHER" id="PTHR33866:SF2">
    <property type="entry name" value="S-ADENOSYLMETHIONINE DECARBOXYLASE PROENZYME"/>
    <property type="match status" value="1"/>
</dbReference>
<dbReference type="Pfam" id="PF02675">
    <property type="entry name" value="AdoMet_dc"/>
    <property type="match status" value="1"/>
</dbReference>
<dbReference type="SUPFAM" id="SSF56276">
    <property type="entry name" value="S-adenosylmethionine decarboxylase"/>
    <property type="match status" value="1"/>
</dbReference>
<comment type="function">
    <text evidence="1">Catalyzes the decarboxylation of S-adenosylmethionine to S-adenosylmethioninamine (dcAdoMet), the propylamine donor required for the synthesis of the polyamines spermine and spermidine from the diamine putrescine.</text>
</comment>
<comment type="catalytic activity">
    <reaction evidence="1">
        <text>S-adenosyl-L-methionine + H(+) = S-adenosyl 3-(methylsulfanyl)propylamine + CO2</text>
        <dbReference type="Rhea" id="RHEA:15981"/>
        <dbReference type="ChEBI" id="CHEBI:15378"/>
        <dbReference type="ChEBI" id="CHEBI:16526"/>
        <dbReference type="ChEBI" id="CHEBI:57443"/>
        <dbReference type="ChEBI" id="CHEBI:59789"/>
        <dbReference type="EC" id="4.1.1.50"/>
    </reaction>
</comment>
<comment type="cofactor">
    <cofactor evidence="1">
        <name>pyruvate</name>
        <dbReference type="ChEBI" id="CHEBI:15361"/>
    </cofactor>
    <text evidence="1">Binds 1 pyruvoyl group covalently per subunit.</text>
</comment>
<comment type="pathway">
    <text evidence="1">Amine and polyamine biosynthesis; S-adenosylmethioninamine biosynthesis; S-adenosylmethioninamine from S-adenosyl-L-methionine: step 1/1.</text>
</comment>
<comment type="subunit">
    <text evidence="1">Heterotetramer of two alpha and two beta chains arranged as a dimer of alpha/beta heterodimers.</text>
</comment>
<comment type="PTM">
    <text evidence="1">Is synthesized initially as an inactive proenzyme. Formation of the active enzyme involves a self-maturation process in which the active site pyruvoyl group is generated from an internal serine residue via an autocatalytic post-translational modification. Two non-identical subunits are generated from the proenzyme in this reaction, and the pyruvate is formed at the N-terminus of the alpha chain, which is derived from the carboxyl end of the proenzyme. The post-translation cleavage follows an unusual pathway, termed non-hydrolytic serinolysis, in which the side chain hydroxyl group of the serine supplies its oxygen atom to form the C-terminus of the beta chain, while the remainder of the serine residue undergoes an oxidative deamination to produce ammonia and the pyruvoyl group blocking the N-terminus of the alpha chain.</text>
</comment>
<comment type="similarity">
    <text evidence="1">Belongs to the prokaryotic AdoMetDC family. Type 1 subfamily.</text>
</comment>
<organism>
    <name type="scientific">Pyrococcus abyssi (strain GE5 / Orsay)</name>
    <dbReference type="NCBI Taxonomy" id="272844"/>
    <lineage>
        <taxon>Archaea</taxon>
        <taxon>Methanobacteriati</taxon>
        <taxon>Methanobacteriota</taxon>
        <taxon>Thermococci</taxon>
        <taxon>Thermococcales</taxon>
        <taxon>Thermococcaceae</taxon>
        <taxon>Pyrococcus</taxon>
    </lineage>
</organism>
<keyword id="KW-0068">Autocatalytic cleavage</keyword>
<keyword id="KW-0210">Decarboxylase</keyword>
<keyword id="KW-0456">Lyase</keyword>
<keyword id="KW-0620">Polyamine biosynthesis</keyword>
<keyword id="KW-0670">Pyruvate</keyword>
<keyword id="KW-0949">S-adenosyl-L-methionine</keyword>
<keyword id="KW-0704">Schiff base</keyword>
<keyword id="KW-0745">Spermidine biosynthesis</keyword>
<keyword id="KW-0865">Zymogen</keyword>
<name>SPEH_PYRAB</name>
<sequence>MDTIGHHYIVEAAGCDPKVIGDADKIREIFLEAAKRGNMEVKASYFFKFSPMGVSGVVIVAESHISVHTWPEKGYAALDVYTCGEKADPEKAVDYILEQFKAQYAHVSEIKRGIEEDDETFTHTILTWEEKLDRRNGKL</sequence>
<protein>
    <recommendedName>
        <fullName evidence="1">S-adenosylmethionine decarboxylase proenzyme</fullName>
        <shortName evidence="1">AdoMetDC</shortName>
        <shortName evidence="1">SAMDC</shortName>
        <ecNumber evidence="1">4.1.1.50</ecNumber>
    </recommendedName>
    <component>
        <recommendedName>
            <fullName evidence="1">S-adenosylmethionine decarboxylase beta chain</fullName>
        </recommendedName>
    </component>
    <component>
        <recommendedName>
            <fullName evidence="1">S-adenosylmethionine decarboxylase alpha chain</fullName>
        </recommendedName>
    </component>
</protein>
<accession>Q9UXT3</accession>
<accession>G8ZKV8</accession>
<reference key="1">
    <citation type="journal article" date="2003" name="Mol. Microbiol.">
        <title>An integrated analysis of the genome of the hyperthermophilic archaeon Pyrococcus abyssi.</title>
        <authorList>
            <person name="Cohen G.N."/>
            <person name="Barbe V."/>
            <person name="Flament D."/>
            <person name="Galperin M."/>
            <person name="Heilig R."/>
            <person name="Lecompte O."/>
            <person name="Poch O."/>
            <person name="Prieur D."/>
            <person name="Querellou J."/>
            <person name="Ripp R."/>
            <person name="Thierry J.-C."/>
            <person name="Van der Oost J."/>
            <person name="Weissenbach J."/>
            <person name="Zivanovic Y."/>
            <person name="Forterre P."/>
        </authorList>
    </citation>
    <scope>NUCLEOTIDE SEQUENCE [LARGE SCALE GENOMIC DNA]</scope>
    <source>
        <strain>GE5 / Orsay</strain>
    </source>
</reference>
<reference key="2">
    <citation type="journal article" date="2012" name="Curr. Microbiol.">
        <title>Re-annotation of two hyperthermophilic archaea Pyrococcus abyssi GE5 and Pyrococcus furiosus DSM 3638.</title>
        <authorList>
            <person name="Gao J."/>
            <person name="Wang J."/>
        </authorList>
    </citation>
    <scope>GENOME REANNOTATION</scope>
    <source>
        <strain>GE5 / Orsay</strain>
    </source>
</reference>
<gene>
    <name evidence="1" type="primary">speH</name>
    <name type="ordered locus">PYRAB17750</name>
    <name type="ORF">PAB1162</name>
</gene>
<feature type="chain" id="PRO_0000030137" description="S-adenosylmethionine decarboxylase beta chain" evidence="1">
    <location>
        <begin position="1"/>
        <end position="62"/>
    </location>
</feature>
<feature type="chain" id="PRO_0000030138" description="S-adenosylmethionine decarboxylase alpha chain" evidence="1">
    <location>
        <begin position="63"/>
        <end position="139"/>
    </location>
</feature>
<feature type="active site" description="Schiff-base intermediate with substrate; via pyruvic acid" evidence="1">
    <location>
        <position position="63"/>
    </location>
</feature>
<feature type="active site" description="Proton acceptor; for processing activity" evidence="1">
    <location>
        <position position="68"/>
    </location>
</feature>
<feature type="active site" description="Proton donor; for catalytic activity" evidence="1">
    <location>
        <position position="83"/>
    </location>
</feature>
<feature type="site" description="Cleavage (non-hydrolytic); by autolysis" evidence="1">
    <location>
        <begin position="62"/>
        <end position="63"/>
    </location>
</feature>
<feature type="modified residue" description="Pyruvic acid (Ser); by autocatalysis" evidence="1">
    <location>
        <position position="63"/>
    </location>
</feature>
<evidence type="ECO:0000255" key="1">
    <source>
        <dbReference type="HAMAP-Rule" id="MF_00464"/>
    </source>
</evidence>